<geneLocation type="chloroplast"/>
<reference key="1">
    <citation type="journal article" date="1995" name="Plant Mol. Biol. Rep.">
        <title>The chloroplast genome of a chlorophyll a+c-containing alga, Odontella sinensis.</title>
        <authorList>
            <person name="Kowallik K.V."/>
            <person name="Stoebe B."/>
            <person name="Schaffran I."/>
            <person name="Kroth-Pancic P."/>
            <person name="Freier U."/>
        </authorList>
    </citation>
    <scope>NUCLEOTIDE SEQUENCE [LARGE SCALE GENOMIC DNA]</scope>
</reference>
<dbReference type="EMBL" id="Z67753">
    <property type="protein sequence ID" value="CAA91642.2"/>
    <property type="molecule type" value="Genomic_DNA"/>
</dbReference>
<dbReference type="PIR" id="S78269">
    <property type="entry name" value="S78269"/>
</dbReference>
<dbReference type="SMR" id="P49491"/>
<dbReference type="GO" id="GO:0009507">
    <property type="term" value="C:chloroplast"/>
    <property type="evidence" value="ECO:0007669"/>
    <property type="project" value="UniProtKB-SubCell"/>
</dbReference>
<dbReference type="GO" id="GO:0022627">
    <property type="term" value="C:cytosolic small ribosomal subunit"/>
    <property type="evidence" value="ECO:0007669"/>
    <property type="project" value="TreeGrafter"/>
</dbReference>
<dbReference type="GO" id="GO:0019843">
    <property type="term" value="F:rRNA binding"/>
    <property type="evidence" value="ECO:0007669"/>
    <property type="project" value="UniProtKB-UniRule"/>
</dbReference>
<dbReference type="GO" id="GO:0003735">
    <property type="term" value="F:structural constituent of ribosome"/>
    <property type="evidence" value="ECO:0007669"/>
    <property type="project" value="InterPro"/>
</dbReference>
<dbReference type="GO" id="GO:0006412">
    <property type="term" value="P:translation"/>
    <property type="evidence" value="ECO:0007669"/>
    <property type="project" value="UniProtKB-UniRule"/>
</dbReference>
<dbReference type="CDD" id="cd02412">
    <property type="entry name" value="KH-II_30S_S3"/>
    <property type="match status" value="1"/>
</dbReference>
<dbReference type="FunFam" id="3.30.300.20:FF:000001">
    <property type="entry name" value="30S ribosomal protein S3"/>
    <property type="match status" value="1"/>
</dbReference>
<dbReference type="Gene3D" id="3.30.300.20">
    <property type="match status" value="1"/>
</dbReference>
<dbReference type="Gene3D" id="3.30.1140.32">
    <property type="entry name" value="Ribosomal protein S3, C-terminal domain"/>
    <property type="match status" value="1"/>
</dbReference>
<dbReference type="HAMAP" id="MF_01309_B">
    <property type="entry name" value="Ribosomal_uS3_B"/>
    <property type="match status" value="1"/>
</dbReference>
<dbReference type="InterPro" id="IPR015946">
    <property type="entry name" value="KH_dom-like_a/b"/>
</dbReference>
<dbReference type="InterPro" id="IPR004044">
    <property type="entry name" value="KH_dom_type_2"/>
</dbReference>
<dbReference type="InterPro" id="IPR009019">
    <property type="entry name" value="KH_sf_prok-type"/>
</dbReference>
<dbReference type="InterPro" id="IPR036419">
    <property type="entry name" value="Ribosomal_S3_C_sf"/>
</dbReference>
<dbReference type="InterPro" id="IPR005704">
    <property type="entry name" value="Ribosomal_uS3_bac-typ"/>
</dbReference>
<dbReference type="InterPro" id="IPR001351">
    <property type="entry name" value="Ribosomal_uS3_C"/>
</dbReference>
<dbReference type="InterPro" id="IPR018280">
    <property type="entry name" value="Ribosomal_uS3_CS"/>
</dbReference>
<dbReference type="NCBIfam" id="TIGR01009">
    <property type="entry name" value="rpsC_bact"/>
    <property type="match status" value="1"/>
</dbReference>
<dbReference type="PANTHER" id="PTHR11760">
    <property type="entry name" value="30S/40S RIBOSOMAL PROTEIN S3"/>
    <property type="match status" value="1"/>
</dbReference>
<dbReference type="PANTHER" id="PTHR11760:SF19">
    <property type="entry name" value="SMALL RIBOSOMAL SUBUNIT PROTEIN US3C"/>
    <property type="match status" value="1"/>
</dbReference>
<dbReference type="Pfam" id="PF07650">
    <property type="entry name" value="KH_2"/>
    <property type="match status" value="1"/>
</dbReference>
<dbReference type="Pfam" id="PF00189">
    <property type="entry name" value="Ribosomal_S3_C"/>
    <property type="match status" value="1"/>
</dbReference>
<dbReference type="SUPFAM" id="SSF54814">
    <property type="entry name" value="Prokaryotic type KH domain (KH-domain type II)"/>
    <property type="match status" value="1"/>
</dbReference>
<dbReference type="SUPFAM" id="SSF54821">
    <property type="entry name" value="Ribosomal protein S3 C-terminal domain"/>
    <property type="match status" value="1"/>
</dbReference>
<dbReference type="PROSITE" id="PS50823">
    <property type="entry name" value="KH_TYPE_2"/>
    <property type="match status" value="1"/>
</dbReference>
<dbReference type="PROSITE" id="PS00548">
    <property type="entry name" value="RIBOSOMAL_S3"/>
    <property type="match status" value="1"/>
</dbReference>
<proteinExistence type="inferred from homology"/>
<protein>
    <recommendedName>
        <fullName evidence="2">Small ribosomal subunit protein uS3c</fullName>
    </recommendedName>
    <alternativeName>
        <fullName>30S ribosomal protein S3, chloroplastic</fullName>
    </alternativeName>
</protein>
<organism>
    <name type="scientific">Trieres chinensis</name>
    <name type="common">Marine centric diatom</name>
    <name type="synonym">Odontella sinensis</name>
    <dbReference type="NCBI Taxonomy" id="1514140"/>
    <lineage>
        <taxon>Eukaryota</taxon>
        <taxon>Sar</taxon>
        <taxon>Stramenopiles</taxon>
        <taxon>Ochrophyta</taxon>
        <taxon>Bacillariophyta</taxon>
        <taxon>Mediophyceae</taxon>
        <taxon>Biddulphiophycidae</taxon>
        <taxon>Eupodiscales</taxon>
        <taxon>Parodontellaceae</taxon>
        <taxon>Trieres</taxon>
    </lineage>
</organism>
<name>RR3_TRICV</name>
<accession>P49491</accession>
<sequence length="214" mass="23982">MGQKTHPLGFRLGITQEHRSAWYANFNQYANLLKEDNQIRTYLNKLAKTASISNIQINRNGLSDQIQLNIETGRPGVLVGENGTGIKTLLSNIKKILPPNRQLTINIIEVEKVNLNASLIGDLVVEQLEDRVAFRKAIRKAMQSALDENVNGIKIQVSGRLNGAEIARSEWIREGRVPLQTLRADIDYATKEAHTIYGVLGVKVWLFKSEILAK</sequence>
<evidence type="ECO:0000250" key="1"/>
<evidence type="ECO:0000305" key="2"/>
<comment type="subunit">
    <text evidence="1">Part of the 30S ribosomal subunit.</text>
</comment>
<comment type="subcellular location">
    <subcellularLocation>
        <location>Plastid</location>
        <location>Chloroplast</location>
    </subcellularLocation>
</comment>
<comment type="similarity">
    <text evidence="2">Belongs to the universal ribosomal protein uS3 family.</text>
</comment>
<keyword id="KW-0150">Chloroplast</keyword>
<keyword id="KW-0934">Plastid</keyword>
<keyword id="KW-0687">Ribonucleoprotein</keyword>
<keyword id="KW-0689">Ribosomal protein</keyword>
<keyword id="KW-0694">RNA-binding</keyword>
<keyword id="KW-0699">rRNA-binding</keyword>
<feature type="chain" id="PRO_0000130292" description="Small ribosomal subunit protein uS3c">
    <location>
        <begin position="1"/>
        <end position="214"/>
    </location>
</feature>
<feature type="domain" description="KH type-2">
    <location>
        <begin position="39"/>
        <end position="111"/>
    </location>
</feature>
<gene>
    <name type="primary">rps3</name>
</gene>